<evidence type="ECO:0000250" key="1"/>
<evidence type="ECO:0000255" key="2">
    <source>
        <dbReference type="PROSITE-ProRule" id="PRU00686"/>
    </source>
</evidence>
<evidence type="ECO:0000269" key="3">
    <source>
    </source>
</evidence>
<evidence type="ECO:0000269" key="4">
    <source>
    </source>
</evidence>
<evidence type="ECO:0000305" key="5"/>
<reference key="1">
    <citation type="journal article" date="2005" name="Nature">
        <title>Generation and annotation of the DNA sequences of human chromosomes 2 and 4.</title>
        <authorList>
            <person name="Hillier L.W."/>
            <person name="Graves T.A."/>
            <person name="Fulton R.S."/>
            <person name="Fulton L.A."/>
            <person name="Pepin K.H."/>
            <person name="Minx P."/>
            <person name="Wagner-McPherson C."/>
            <person name="Layman D."/>
            <person name="Wylie K."/>
            <person name="Sekhon M."/>
            <person name="Becker M.C."/>
            <person name="Fewell G.A."/>
            <person name="Delehaunty K.D."/>
            <person name="Miner T.L."/>
            <person name="Nash W.E."/>
            <person name="Kremitzki C."/>
            <person name="Oddy L."/>
            <person name="Du H."/>
            <person name="Sun H."/>
            <person name="Bradshaw-Cordum H."/>
            <person name="Ali J."/>
            <person name="Carter J."/>
            <person name="Cordes M."/>
            <person name="Harris A."/>
            <person name="Isak A."/>
            <person name="van Brunt A."/>
            <person name="Nguyen C."/>
            <person name="Du F."/>
            <person name="Courtney L."/>
            <person name="Kalicki J."/>
            <person name="Ozersky P."/>
            <person name="Abbott S."/>
            <person name="Armstrong J."/>
            <person name="Belter E.A."/>
            <person name="Caruso L."/>
            <person name="Cedroni M."/>
            <person name="Cotton M."/>
            <person name="Davidson T."/>
            <person name="Desai A."/>
            <person name="Elliott G."/>
            <person name="Erb T."/>
            <person name="Fronick C."/>
            <person name="Gaige T."/>
            <person name="Haakenson W."/>
            <person name="Haglund K."/>
            <person name="Holmes A."/>
            <person name="Harkins R."/>
            <person name="Kim K."/>
            <person name="Kruchowski S.S."/>
            <person name="Strong C.M."/>
            <person name="Grewal N."/>
            <person name="Goyea E."/>
            <person name="Hou S."/>
            <person name="Levy A."/>
            <person name="Martinka S."/>
            <person name="Mead K."/>
            <person name="McLellan M.D."/>
            <person name="Meyer R."/>
            <person name="Randall-Maher J."/>
            <person name="Tomlinson C."/>
            <person name="Dauphin-Kohlberg S."/>
            <person name="Kozlowicz-Reilly A."/>
            <person name="Shah N."/>
            <person name="Swearengen-Shahid S."/>
            <person name="Snider J."/>
            <person name="Strong J.T."/>
            <person name="Thompson J."/>
            <person name="Yoakum M."/>
            <person name="Leonard S."/>
            <person name="Pearman C."/>
            <person name="Trani L."/>
            <person name="Radionenko M."/>
            <person name="Waligorski J.E."/>
            <person name="Wang C."/>
            <person name="Rock S.M."/>
            <person name="Tin-Wollam A.-M."/>
            <person name="Maupin R."/>
            <person name="Latreille P."/>
            <person name="Wendl M.C."/>
            <person name="Yang S.-P."/>
            <person name="Pohl C."/>
            <person name="Wallis J.W."/>
            <person name="Spieth J."/>
            <person name="Bieri T.A."/>
            <person name="Berkowicz N."/>
            <person name="Nelson J.O."/>
            <person name="Osborne J."/>
            <person name="Ding L."/>
            <person name="Meyer R."/>
            <person name="Sabo A."/>
            <person name="Shotland Y."/>
            <person name="Sinha P."/>
            <person name="Wohldmann P.E."/>
            <person name="Cook L.L."/>
            <person name="Hickenbotham M.T."/>
            <person name="Eldred J."/>
            <person name="Williams D."/>
            <person name="Jones T.A."/>
            <person name="She X."/>
            <person name="Ciccarelli F.D."/>
            <person name="Izaurralde E."/>
            <person name="Taylor J."/>
            <person name="Schmutz J."/>
            <person name="Myers R.M."/>
            <person name="Cox D.R."/>
            <person name="Huang X."/>
            <person name="McPherson J.D."/>
            <person name="Mardis E.R."/>
            <person name="Clifton S.W."/>
            <person name="Warren W.C."/>
            <person name="Chinwalla A.T."/>
            <person name="Eddy S.R."/>
            <person name="Marra M.A."/>
            <person name="Ovcharenko I."/>
            <person name="Furey T.S."/>
            <person name="Miller W."/>
            <person name="Eichler E.E."/>
            <person name="Bork P."/>
            <person name="Suyama M."/>
            <person name="Torrents D."/>
            <person name="Waterston R.H."/>
            <person name="Wilson R.K."/>
        </authorList>
    </citation>
    <scope>NUCLEOTIDE SEQUENCE [LARGE SCALE GENOMIC DNA]</scope>
</reference>
<reference key="2">
    <citation type="journal article" date="2010" name="Am. J. Hum. Genet.">
        <title>Homozygosity mapping reveals mutations of GRXCR1 as a cause of autosomal-recessive nonsyndromic hearing impairment.</title>
        <authorList>
            <person name="Schraders M."/>
            <person name="Lee K."/>
            <person name="Oostrik J."/>
            <person name="Huygen P.L."/>
            <person name="Ali G."/>
            <person name="Hoefsloot L.H."/>
            <person name="Veltman J.A."/>
            <person name="Cremers F.P."/>
            <person name="Basit S."/>
            <person name="Ansar M."/>
            <person name="Cremers C.W."/>
            <person name="Kunst H.P."/>
            <person name="Ahmad W."/>
            <person name="Admiraal R.J."/>
            <person name="Leal S.M."/>
            <person name="Kremer H."/>
        </authorList>
    </citation>
    <scope>VARIANT DFNB25 CYS-138</scope>
    <scope>VARIANTS LYS-9 AND VAL-91</scope>
    <scope>TISSUE SPECIFICITY</scope>
</reference>
<reference key="3">
    <citation type="journal article" date="2010" name="Am. J. Hum. Genet.">
        <title>Mutations in Grxcr1 are the basis for inner ear dysfunction in the pirouette mouse.</title>
        <authorList>
            <person name="Odeh H."/>
            <person name="Hunker K.L."/>
            <person name="Belyantseva I.A."/>
            <person name="Azaiez H."/>
            <person name="Avenarius M.R."/>
            <person name="Zheng L."/>
            <person name="Peters L.M."/>
            <person name="Gagnon L.H."/>
            <person name="Hagiwara N."/>
            <person name="Skynner M.J."/>
            <person name="Brilliant M.H."/>
            <person name="Allen N.D."/>
            <person name="Riazuddin S."/>
            <person name="Johnson K.R."/>
            <person name="Raphael Y."/>
            <person name="Najmabadi H."/>
            <person name="Friedman T.B."/>
            <person name="Bartles J.R."/>
            <person name="Smith R.J."/>
            <person name="Kohrman D.C."/>
        </authorList>
    </citation>
    <scope>VARIANTS DFNB25 LEU-38; SER-64 AND VAL-153</scope>
    <scope>VARIANTS GLU-51 AND VAL-91</scope>
</reference>
<gene>
    <name type="primary">GRXCR1</name>
    <name type="synonym">DFNB25</name>
</gene>
<organism>
    <name type="scientific">Homo sapiens</name>
    <name type="common">Human</name>
    <dbReference type="NCBI Taxonomy" id="9606"/>
    <lineage>
        <taxon>Eukaryota</taxon>
        <taxon>Metazoa</taxon>
        <taxon>Chordata</taxon>
        <taxon>Craniata</taxon>
        <taxon>Vertebrata</taxon>
        <taxon>Euteleostomi</taxon>
        <taxon>Mammalia</taxon>
        <taxon>Eutheria</taxon>
        <taxon>Euarchontoglires</taxon>
        <taxon>Primates</taxon>
        <taxon>Haplorrhini</taxon>
        <taxon>Catarrhini</taxon>
        <taxon>Hominidae</taxon>
        <taxon>Homo</taxon>
    </lineage>
</organism>
<accession>A8MXD5</accession>
<protein>
    <recommendedName>
        <fullName>Glutaredoxin domain-containing cysteine-rich protein 1</fullName>
    </recommendedName>
</protein>
<comment type="function">
    <text evidence="1">May play a role in actin filament architecture in developing stereocilia of sensory cells.</text>
</comment>
<comment type="interaction">
    <interactant intactId="EBI-5235612">
        <id>A8MXD5</id>
    </interactant>
    <interactant intactId="EBI-3905054">
        <id>P13196</id>
        <label>ALAS1</label>
    </interactant>
    <organismsDiffer>false</organismsDiffer>
    <experiments>3</experiments>
</comment>
<comment type="interaction">
    <interactant intactId="EBI-5235612">
        <id>A8MXD5</id>
    </interactant>
    <interactant intactId="EBI-1051165">
        <id>P40123</id>
        <label>CAP2</label>
    </interactant>
    <organismsDiffer>false</organismsDiffer>
    <experiments>3</experiments>
</comment>
<comment type="interaction">
    <interactant intactId="EBI-5235612">
        <id>A8MXD5</id>
    </interactant>
    <interactant intactId="EBI-6509505">
        <id>Q0VD86</id>
        <label>INCA1</label>
    </interactant>
    <organismsDiffer>false</organismsDiffer>
    <experiments>3</experiments>
</comment>
<comment type="interaction">
    <interactant intactId="EBI-5235612">
        <id>A8MXD5</id>
    </interactant>
    <interactant intactId="EBI-79165">
        <id>Q9NRD5</id>
        <label>PICK1</label>
    </interactant>
    <organismsDiffer>false</organismsDiffer>
    <experiments>3</experiments>
</comment>
<comment type="interaction">
    <interactant intactId="EBI-5235612">
        <id>A8MXD5</id>
    </interactant>
    <interactant intactId="EBI-11320284">
        <id>Q9NQX0</id>
        <label>PRDM6</label>
    </interactant>
    <organismsDiffer>false</organismsDiffer>
    <experiments>3</experiments>
</comment>
<comment type="interaction">
    <interactant intactId="EBI-5235612">
        <id>A8MXD5</id>
    </interactant>
    <interactant intactId="EBI-727004">
        <id>O00560</id>
        <label>SDCBP</label>
    </interactant>
    <organismsDiffer>false</organismsDiffer>
    <experiments>3</experiments>
</comment>
<comment type="interaction">
    <interactant intactId="EBI-5235612">
        <id>A8MXD5</id>
    </interactant>
    <interactant intactId="EBI-8099743">
        <id>Q86XE0</id>
        <label>SNX32</label>
    </interactant>
    <organismsDiffer>false</organismsDiffer>
    <experiments>3</experiments>
</comment>
<comment type="interaction">
    <interactant intactId="EBI-5235612">
        <id>A8MXD5</id>
    </interactant>
    <interactant intactId="EBI-11523345">
        <id>Q8IYF3-3</id>
        <label>TEX11</label>
    </interactant>
    <organismsDiffer>false</organismsDiffer>
    <experiments>3</experiments>
</comment>
<comment type="subcellular location">
    <subcellularLocation>
        <location evidence="1">Cell projection</location>
        <location evidence="1">Stereocilium</location>
    </subcellularLocation>
    <subcellularLocation>
        <location evidence="1">Cell projection</location>
        <location evidence="1">Microvillus</location>
    </subcellularLocation>
    <subcellularLocation>
        <location evidence="1">Cell projection</location>
        <location evidence="1">Kinocilium</location>
    </subcellularLocation>
    <text evidence="1">In the inner ear, localized to stereocilia, apical microvilli of sensory cells and kinocilia.</text>
</comment>
<comment type="tissue specificity">
    <text evidence="4">Expressed at low levels in adult lung, brain and duodenum with moderate levels in testis. Highly expressed in fetal cochlea.</text>
</comment>
<comment type="disease" evidence="3 4">
    <disease id="DI-02537">
        <name>Deafness, autosomal recessive, 25</name>
        <acronym>DFNB25</acronym>
        <description>A form of non-syndromic sensorineural deafness characterized by moderate to severe or profound hearing loss which is progressive in some individuals but not in others. Speech development is impaired in some but not all affected individuals, and vestibular dysfunction is observed in some affected individuals. Sensorineural deafness results from damage to the neural receptors of the inner ear, the nerve pathways to the brain, or the area of the brain that receives sound information.</description>
        <dbReference type="MIM" id="613285"/>
    </disease>
    <text>The disease is caused by variants affecting the gene represented in this entry.</text>
</comment>
<comment type="similarity">
    <text evidence="5">Belongs to the GRXCR1 family.</text>
</comment>
<dbReference type="EMBL" id="AC098861">
    <property type="status" value="NOT_ANNOTATED_CDS"/>
    <property type="molecule type" value="Genomic_DNA"/>
</dbReference>
<dbReference type="EMBL" id="AC108035">
    <property type="status" value="NOT_ANNOTATED_CDS"/>
    <property type="molecule type" value="Genomic_DNA"/>
</dbReference>
<dbReference type="CCDS" id="CCDS43225.1"/>
<dbReference type="RefSeq" id="NP_001073945.1">
    <property type="nucleotide sequence ID" value="NM_001080476.3"/>
</dbReference>
<dbReference type="BioGRID" id="133037">
    <property type="interactions" value="30"/>
</dbReference>
<dbReference type="FunCoup" id="A8MXD5">
    <property type="interactions" value="6"/>
</dbReference>
<dbReference type="IntAct" id="A8MXD5">
    <property type="interactions" value="16"/>
</dbReference>
<dbReference type="STRING" id="9606.ENSP00000382670"/>
<dbReference type="iPTMnet" id="A8MXD5"/>
<dbReference type="PhosphoSitePlus" id="A8MXD5"/>
<dbReference type="BioMuta" id="GRXCR1"/>
<dbReference type="MassIVE" id="A8MXD5"/>
<dbReference type="PaxDb" id="9606-ENSP00000382670"/>
<dbReference type="Antibodypedia" id="51684">
    <property type="antibodies" value="44 antibodies from 13 providers"/>
</dbReference>
<dbReference type="DNASU" id="389207"/>
<dbReference type="Ensembl" id="ENST00000399770.3">
    <property type="protein sequence ID" value="ENSP00000382670.2"/>
    <property type="gene ID" value="ENSG00000215203.3"/>
</dbReference>
<dbReference type="GeneID" id="389207"/>
<dbReference type="KEGG" id="hsa:389207"/>
<dbReference type="MANE-Select" id="ENST00000399770.3">
    <property type="protein sequence ID" value="ENSP00000382670.2"/>
    <property type="RefSeq nucleotide sequence ID" value="NM_001080476.3"/>
    <property type="RefSeq protein sequence ID" value="NP_001073945.1"/>
</dbReference>
<dbReference type="UCSC" id="uc003gwt.4">
    <property type="organism name" value="human"/>
</dbReference>
<dbReference type="AGR" id="HGNC:31673"/>
<dbReference type="CTD" id="389207"/>
<dbReference type="DisGeNET" id="389207"/>
<dbReference type="GeneCards" id="GRXCR1"/>
<dbReference type="HGNC" id="HGNC:31673">
    <property type="gene designation" value="GRXCR1"/>
</dbReference>
<dbReference type="HPA" id="ENSG00000215203">
    <property type="expression patterns" value="Tissue enriched (seminal)"/>
</dbReference>
<dbReference type="MalaCards" id="GRXCR1"/>
<dbReference type="MIM" id="613283">
    <property type="type" value="gene"/>
</dbReference>
<dbReference type="MIM" id="613285">
    <property type="type" value="phenotype"/>
</dbReference>
<dbReference type="neXtProt" id="NX_A8MXD5"/>
<dbReference type="OpenTargets" id="ENSG00000215203"/>
<dbReference type="Orphanet" id="90636">
    <property type="disease" value="Rare autosomal recessive non-syndromic sensorineural deafness type DFNB"/>
</dbReference>
<dbReference type="PharmGKB" id="PA162390253"/>
<dbReference type="VEuPathDB" id="HostDB:ENSG00000215203"/>
<dbReference type="eggNOG" id="KOG2824">
    <property type="taxonomic scope" value="Eukaryota"/>
</dbReference>
<dbReference type="GeneTree" id="ENSGT00940000159219"/>
<dbReference type="HOGENOM" id="CLU_067117_0_0_1"/>
<dbReference type="InParanoid" id="A8MXD5"/>
<dbReference type="OMA" id="ACHGSKM"/>
<dbReference type="OrthoDB" id="423313at2759"/>
<dbReference type="PAN-GO" id="A8MXD5">
    <property type="GO annotations" value="3 GO annotations based on evolutionary models"/>
</dbReference>
<dbReference type="PhylomeDB" id="A8MXD5"/>
<dbReference type="TreeFam" id="TF315372"/>
<dbReference type="PathwayCommons" id="A8MXD5"/>
<dbReference type="Reactome" id="R-HSA-9662360">
    <property type="pathway name" value="Sensory processing of sound by inner hair cells of the cochlea"/>
</dbReference>
<dbReference type="Reactome" id="R-HSA-9662361">
    <property type="pathway name" value="Sensory processing of sound by outer hair cells of the cochlea"/>
</dbReference>
<dbReference type="SignaLink" id="A8MXD5"/>
<dbReference type="BioGRID-ORCS" id="389207">
    <property type="hits" value="4 hits in 1142 CRISPR screens"/>
</dbReference>
<dbReference type="ChiTaRS" id="GRXCR1">
    <property type="organism name" value="human"/>
</dbReference>
<dbReference type="GeneWiki" id="GRXCR1"/>
<dbReference type="GenomeRNAi" id="389207"/>
<dbReference type="Pharos" id="A8MXD5">
    <property type="development level" value="Tdark"/>
</dbReference>
<dbReference type="PRO" id="PR:A8MXD5"/>
<dbReference type="Proteomes" id="UP000005640">
    <property type="component" value="Chromosome 4"/>
</dbReference>
<dbReference type="RNAct" id="A8MXD5">
    <property type="molecule type" value="protein"/>
</dbReference>
<dbReference type="Bgee" id="ENSG00000215203">
    <property type="expression patterns" value="Expressed in male germ line stem cell (sensu Vertebrata) in testis and 4 other cell types or tissues"/>
</dbReference>
<dbReference type="GO" id="GO:0060091">
    <property type="term" value="C:kinocilium"/>
    <property type="evidence" value="ECO:0000250"/>
    <property type="project" value="UniProtKB"/>
</dbReference>
<dbReference type="GO" id="GO:0005902">
    <property type="term" value="C:microvillus"/>
    <property type="evidence" value="ECO:0007669"/>
    <property type="project" value="UniProtKB-SubCell"/>
</dbReference>
<dbReference type="GO" id="GO:0032420">
    <property type="term" value="C:stereocilium"/>
    <property type="evidence" value="ECO:0000250"/>
    <property type="project" value="UniProtKB"/>
</dbReference>
<dbReference type="GO" id="GO:0060088">
    <property type="term" value="P:auditory receptor cell stereocilium organization"/>
    <property type="evidence" value="ECO:0007669"/>
    <property type="project" value="Ensembl"/>
</dbReference>
<dbReference type="GO" id="GO:0070588">
    <property type="term" value="P:calcium ion transmembrane transport"/>
    <property type="evidence" value="ECO:0007669"/>
    <property type="project" value="Ensembl"/>
</dbReference>
<dbReference type="GO" id="GO:0090102">
    <property type="term" value="P:cochlea development"/>
    <property type="evidence" value="ECO:0007669"/>
    <property type="project" value="Ensembl"/>
</dbReference>
<dbReference type="GO" id="GO:0051649">
    <property type="term" value="P:establishment of localization in cell"/>
    <property type="evidence" value="ECO:0007669"/>
    <property type="project" value="Ensembl"/>
</dbReference>
<dbReference type="GO" id="GO:0006887">
    <property type="term" value="P:exocytosis"/>
    <property type="evidence" value="ECO:0007669"/>
    <property type="project" value="Ensembl"/>
</dbReference>
<dbReference type="GO" id="GO:0060119">
    <property type="term" value="P:inner ear receptor cell development"/>
    <property type="evidence" value="ECO:0000250"/>
    <property type="project" value="UniProtKB"/>
</dbReference>
<dbReference type="GO" id="GO:0060122">
    <property type="term" value="P:inner ear receptor cell stereocilium organization"/>
    <property type="evidence" value="ECO:0000250"/>
    <property type="project" value="UniProtKB"/>
</dbReference>
<dbReference type="GO" id="GO:0007009">
    <property type="term" value="P:plasma membrane organization"/>
    <property type="evidence" value="ECO:0007669"/>
    <property type="project" value="Ensembl"/>
</dbReference>
<dbReference type="GO" id="GO:1905144">
    <property type="term" value="P:response to acetylcholine"/>
    <property type="evidence" value="ECO:0007669"/>
    <property type="project" value="Ensembl"/>
</dbReference>
<dbReference type="GO" id="GO:0051592">
    <property type="term" value="P:response to calcium ion"/>
    <property type="evidence" value="ECO:0007669"/>
    <property type="project" value="Ensembl"/>
</dbReference>
<dbReference type="GO" id="GO:0007605">
    <property type="term" value="P:sensory perception of sound"/>
    <property type="evidence" value="ECO:0000250"/>
    <property type="project" value="UniProtKB"/>
</dbReference>
<dbReference type="GO" id="GO:0060118">
    <property type="term" value="P:vestibular receptor cell development"/>
    <property type="evidence" value="ECO:0000250"/>
    <property type="project" value="UniProtKB"/>
</dbReference>
<dbReference type="CDD" id="cd03031">
    <property type="entry name" value="GRX_GRX_like"/>
    <property type="match status" value="1"/>
</dbReference>
<dbReference type="FunFam" id="3.40.30.10:FF:000178">
    <property type="entry name" value="glutaredoxin domain-containing cysteine-rich protein 1"/>
    <property type="match status" value="1"/>
</dbReference>
<dbReference type="Gene3D" id="3.40.30.10">
    <property type="entry name" value="Glutaredoxin"/>
    <property type="match status" value="1"/>
</dbReference>
<dbReference type="InterPro" id="IPR002109">
    <property type="entry name" value="Glutaredoxin"/>
</dbReference>
<dbReference type="InterPro" id="IPR042797">
    <property type="entry name" value="GRXCR1"/>
</dbReference>
<dbReference type="InterPro" id="IPR036249">
    <property type="entry name" value="Thioredoxin-like_sf"/>
</dbReference>
<dbReference type="PANTHER" id="PTHR46990">
    <property type="entry name" value="GLUTAREDOXIN DOMAIN-CONTAINING CYSTEINE-RICH PROTEIN 1"/>
    <property type="match status" value="1"/>
</dbReference>
<dbReference type="PANTHER" id="PTHR46990:SF1">
    <property type="entry name" value="GLUTAREDOXIN DOMAIN-CONTAINING CYSTEINE-RICH PROTEIN 1"/>
    <property type="match status" value="1"/>
</dbReference>
<dbReference type="Pfam" id="PF00462">
    <property type="entry name" value="Glutaredoxin"/>
    <property type="match status" value="1"/>
</dbReference>
<dbReference type="Pfam" id="PF23733">
    <property type="entry name" value="GRXCR1-2_C"/>
    <property type="match status" value="1"/>
</dbReference>
<dbReference type="SUPFAM" id="SSF52833">
    <property type="entry name" value="Thioredoxin-like"/>
    <property type="match status" value="1"/>
</dbReference>
<dbReference type="PROSITE" id="PS51354">
    <property type="entry name" value="GLUTAREDOXIN_2"/>
    <property type="match status" value="1"/>
</dbReference>
<keyword id="KW-0966">Cell projection</keyword>
<keyword id="KW-0969">Cilium</keyword>
<keyword id="KW-0209">Deafness</keyword>
<keyword id="KW-0225">Disease variant</keyword>
<keyword id="KW-1009">Hearing</keyword>
<keyword id="KW-1010">Non-syndromic deafness</keyword>
<keyword id="KW-1185">Reference proteome</keyword>
<sequence>MLKREMKPESDRPRKVRFRIASSHSGRVLKEVYEDGQPSGSLDSECASICGIDGLGDSDGQQNGHIESEGDENENDQDSLLVLARAASEKGFGTRRVNILSKNGTVRGVKYKVSAGQALFNNLTKVLQQPSTDLEFDRVVIYTTCLRVVRTTFERCELVRKIFQNHRVKFEEKNIALNGEYGKELDERCRRVSEAPSLPVVFIDGHYLGGAEKILSMNESGELQDILTKIERVQHPHECPSCGGFGFLPCSVCHGSKMSMFRNCFTDSFKALKCTACNENGLQRCKNCAG</sequence>
<name>GRCR1_HUMAN</name>
<feature type="chain" id="PRO_0000349189" description="Glutaredoxin domain-containing cysteine-rich protein 1">
    <location>
        <begin position="1"/>
        <end position="290"/>
    </location>
</feature>
<feature type="domain" description="Glutaredoxin" evidence="2">
    <location>
        <begin position="127"/>
        <end position="234"/>
    </location>
</feature>
<feature type="sequence variant" id="VAR_063159" description="In dbSNP:rs78136490." evidence="4">
    <original>E</original>
    <variation>K</variation>
    <location>
        <position position="9"/>
    </location>
</feature>
<feature type="sequence variant" id="VAR_063160" description="In DFNB25; dbSNP:rs367784906." evidence="3">
    <original>P</original>
    <variation>L</variation>
    <location>
        <position position="38"/>
    </location>
</feature>
<feature type="sequence variant" id="VAR_063161" description="In dbSNP:rs727505186." evidence="3">
    <original>G</original>
    <variation>E</variation>
    <location>
        <position position="51"/>
    </location>
</feature>
<feature type="sequence variant" id="VAR_063162" description="In DFNB25; dbSNP:rs370551174." evidence="3">
    <original>G</original>
    <variation>S</variation>
    <location>
        <position position="64"/>
    </location>
</feature>
<feature type="sequence variant" id="VAR_063163" description="In dbSNP:rs113203706." evidence="3 4">
    <original>G</original>
    <variation>V</variation>
    <location>
        <position position="91"/>
    </location>
</feature>
<feature type="sequence variant" id="VAR_063164" description="In DFNB25; dbSNP:rs267606856." evidence="4">
    <original>R</original>
    <variation>C</variation>
    <location>
        <position position="138"/>
    </location>
</feature>
<feature type="sequence variant" id="VAR_063165" description="In DFNB25; dbSNP:rs770874273." evidence="3">
    <original>F</original>
    <variation>V</variation>
    <location>
        <position position="153"/>
    </location>
</feature>
<proteinExistence type="evidence at protein level"/>